<reference key="1">
    <citation type="submission" date="2007-07" db="EMBL/GenBank/DDBJ databases">
        <title>Complete genome sequence of Campylobacter hominis ATCC BAA-381, a commensal isolated from the human gastrointestinal tract.</title>
        <authorList>
            <person name="Fouts D.E."/>
            <person name="Mongodin E.F."/>
            <person name="Puiu D."/>
            <person name="Sebastian Y."/>
            <person name="Miller W.G."/>
            <person name="Mandrell R.E."/>
            <person name="Nelson K.E."/>
        </authorList>
    </citation>
    <scope>NUCLEOTIDE SEQUENCE [LARGE SCALE GENOMIC DNA]</scope>
    <source>
        <strain>ATCC BAA-381 / DSM 21671 / CCUG 45161 / LMG 19568 / NCTC 13146 / CH001A</strain>
    </source>
</reference>
<gene>
    <name evidence="1" type="primary">mnmG</name>
    <name evidence="1" type="synonym">gidA</name>
    <name type="ordered locus">CHAB381_0710</name>
</gene>
<dbReference type="EMBL" id="CP000776">
    <property type="protein sequence ID" value="ABS51738.1"/>
    <property type="molecule type" value="Genomic_DNA"/>
</dbReference>
<dbReference type="RefSeq" id="WP_012108577.1">
    <property type="nucleotide sequence ID" value="NC_009714.1"/>
</dbReference>
<dbReference type="SMR" id="A7I199"/>
<dbReference type="STRING" id="360107.CHAB381_0710"/>
<dbReference type="KEGG" id="cha:CHAB381_0710"/>
<dbReference type="eggNOG" id="COG0445">
    <property type="taxonomic scope" value="Bacteria"/>
</dbReference>
<dbReference type="HOGENOM" id="CLU_007831_2_2_7"/>
<dbReference type="OrthoDB" id="9815560at2"/>
<dbReference type="Proteomes" id="UP000002407">
    <property type="component" value="Chromosome"/>
</dbReference>
<dbReference type="GO" id="GO:0005829">
    <property type="term" value="C:cytosol"/>
    <property type="evidence" value="ECO:0007669"/>
    <property type="project" value="TreeGrafter"/>
</dbReference>
<dbReference type="GO" id="GO:0050660">
    <property type="term" value="F:flavin adenine dinucleotide binding"/>
    <property type="evidence" value="ECO:0007669"/>
    <property type="project" value="UniProtKB-UniRule"/>
</dbReference>
<dbReference type="GO" id="GO:0030488">
    <property type="term" value="P:tRNA methylation"/>
    <property type="evidence" value="ECO:0007669"/>
    <property type="project" value="TreeGrafter"/>
</dbReference>
<dbReference type="GO" id="GO:0002098">
    <property type="term" value="P:tRNA wobble uridine modification"/>
    <property type="evidence" value="ECO:0007669"/>
    <property type="project" value="InterPro"/>
</dbReference>
<dbReference type="FunFam" id="1.10.150.570:FF:000001">
    <property type="entry name" value="tRNA uridine 5-carboxymethylaminomethyl modification enzyme MnmG"/>
    <property type="match status" value="1"/>
</dbReference>
<dbReference type="FunFam" id="3.50.50.60:FF:000002">
    <property type="entry name" value="tRNA uridine 5-carboxymethylaminomethyl modification enzyme MnmG"/>
    <property type="match status" value="1"/>
</dbReference>
<dbReference type="Gene3D" id="3.50.50.60">
    <property type="entry name" value="FAD/NAD(P)-binding domain"/>
    <property type="match status" value="2"/>
</dbReference>
<dbReference type="Gene3D" id="1.10.150.570">
    <property type="entry name" value="GidA associated domain, C-terminal subdomain"/>
    <property type="match status" value="1"/>
</dbReference>
<dbReference type="Gene3D" id="1.10.10.1800">
    <property type="entry name" value="tRNA uridine 5-carboxymethylaminomethyl modification enzyme MnmG/GidA"/>
    <property type="match status" value="1"/>
</dbReference>
<dbReference type="HAMAP" id="MF_00129">
    <property type="entry name" value="MnmG_GidA"/>
    <property type="match status" value="1"/>
</dbReference>
<dbReference type="InterPro" id="IPR036188">
    <property type="entry name" value="FAD/NAD-bd_sf"/>
</dbReference>
<dbReference type="InterPro" id="IPR049312">
    <property type="entry name" value="GIDA_C_N"/>
</dbReference>
<dbReference type="InterPro" id="IPR004416">
    <property type="entry name" value="MnmG"/>
</dbReference>
<dbReference type="InterPro" id="IPR002218">
    <property type="entry name" value="MnmG-rel"/>
</dbReference>
<dbReference type="InterPro" id="IPR020595">
    <property type="entry name" value="MnmG-rel_CS"/>
</dbReference>
<dbReference type="InterPro" id="IPR026904">
    <property type="entry name" value="MnmG_C"/>
</dbReference>
<dbReference type="InterPro" id="IPR047001">
    <property type="entry name" value="MnmG_C_subdom"/>
</dbReference>
<dbReference type="InterPro" id="IPR044920">
    <property type="entry name" value="MnmG_C_subdom_sf"/>
</dbReference>
<dbReference type="InterPro" id="IPR040131">
    <property type="entry name" value="MnmG_N"/>
</dbReference>
<dbReference type="NCBIfam" id="TIGR00136">
    <property type="entry name" value="mnmG_gidA"/>
    <property type="match status" value="1"/>
</dbReference>
<dbReference type="PANTHER" id="PTHR11806">
    <property type="entry name" value="GLUCOSE INHIBITED DIVISION PROTEIN A"/>
    <property type="match status" value="1"/>
</dbReference>
<dbReference type="PANTHER" id="PTHR11806:SF0">
    <property type="entry name" value="PROTEIN MTO1 HOMOLOG, MITOCHONDRIAL"/>
    <property type="match status" value="1"/>
</dbReference>
<dbReference type="Pfam" id="PF01134">
    <property type="entry name" value="GIDA"/>
    <property type="match status" value="1"/>
</dbReference>
<dbReference type="Pfam" id="PF21680">
    <property type="entry name" value="GIDA_C_1st"/>
    <property type="match status" value="1"/>
</dbReference>
<dbReference type="Pfam" id="PF13932">
    <property type="entry name" value="SAM_GIDA_C"/>
    <property type="match status" value="1"/>
</dbReference>
<dbReference type="PRINTS" id="PR00411">
    <property type="entry name" value="PNDRDTASEI"/>
</dbReference>
<dbReference type="SMART" id="SM01228">
    <property type="entry name" value="GIDA_assoc_3"/>
    <property type="match status" value="1"/>
</dbReference>
<dbReference type="SUPFAM" id="SSF51905">
    <property type="entry name" value="FAD/NAD(P)-binding domain"/>
    <property type="match status" value="1"/>
</dbReference>
<dbReference type="PROSITE" id="PS01280">
    <property type="entry name" value="GIDA_1"/>
    <property type="match status" value="1"/>
</dbReference>
<dbReference type="PROSITE" id="PS01281">
    <property type="entry name" value="GIDA_2"/>
    <property type="match status" value="1"/>
</dbReference>
<organism>
    <name type="scientific">Campylobacter hominis (strain ATCC BAA-381 / DSM 21671 / CCUG 45161 / LMG 19568 / NCTC 13146 / CH001A)</name>
    <dbReference type="NCBI Taxonomy" id="360107"/>
    <lineage>
        <taxon>Bacteria</taxon>
        <taxon>Pseudomonadati</taxon>
        <taxon>Campylobacterota</taxon>
        <taxon>Epsilonproteobacteria</taxon>
        <taxon>Campylobacterales</taxon>
        <taxon>Campylobacteraceae</taxon>
        <taxon>Campylobacter</taxon>
    </lineage>
</organism>
<feature type="chain" id="PRO_0000345250" description="tRNA uridine 5-carboxymethylaminomethyl modification enzyme MnmG">
    <location>
        <begin position="1"/>
        <end position="640"/>
    </location>
</feature>
<feature type="binding site" evidence="1">
    <location>
        <begin position="9"/>
        <end position="14"/>
    </location>
    <ligand>
        <name>FAD</name>
        <dbReference type="ChEBI" id="CHEBI:57692"/>
    </ligand>
</feature>
<feature type="binding site" evidence="1">
    <location>
        <begin position="289"/>
        <end position="303"/>
    </location>
    <ligand>
        <name>NAD(+)</name>
        <dbReference type="ChEBI" id="CHEBI:57540"/>
    </ligand>
</feature>
<proteinExistence type="inferred from homology"/>
<evidence type="ECO:0000255" key="1">
    <source>
        <dbReference type="HAMAP-Rule" id="MF_00129"/>
    </source>
</evidence>
<protein>
    <recommendedName>
        <fullName evidence="1">tRNA uridine 5-carboxymethylaminomethyl modification enzyme MnmG</fullName>
    </recommendedName>
    <alternativeName>
        <fullName evidence="1">Glucose-inhibited division protein A</fullName>
    </alternativeName>
</protein>
<comment type="function">
    <text evidence="1">NAD-binding protein involved in the addition of a carboxymethylaminomethyl (cmnm) group at the wobble position (U34) of certain tRNAs, forming tRNA-cmnm(5)s(2)U34.</text>
</comment>
<comment type="cofactor">
    <cofactor evidence="1">
        <name>FAD</name>
        <dbReference type="ChEBI" id="CHEBI:57692"/>
    </cofactor>
</comment>
<comment type="subunit">
    <text evidence="1">Homodimer. Heterotetramer of two MnmE and two MnmG subunits.</text>
</comment>
<comment type="subcellular location">
    <subcellularLocation>
        <location evidence="1">Cytoplasm</location>
    </subcellularLocation>
</comment>
<comment type="similarity">
    <text evidence="1">Belongs to the MnmG family.</text>
</comment>
<name>MNMG_CAMHC</name>
<sequence length="640" mass="71354">MQYDIIVIGGGHAGIEACLAAARMGAKTLLITILAEQIGAASCNPAIGGLAKGHLVKEIDALGGQMGVCTDFAGIQFRTLNESKGPAVRGSRAQIDMDRYRIFMRNVLLNTSNLNISQEIATEILTENDQITGVKTHLGNVYETNRLIITTGTFLNGLIHVGENKLSAGRVGEFPSIRLSQSLKNLGLKMGRLKTGTCPRVDAKTIDFSALELQNGDAQAHPFSFKTRFFANEIEKFTKNLSKNFDENGNFNPTQIPCYITYTNEKTHEIIRNNFDRAPLFTGQIHGIGPRYCPSIEDKINKFADRDRHHVFVEPQTAEASEYYLNGLSTSLPYDVQVEFLHSVKGFENAKIVRHGYAIEYDFVEPTELKHSLETKKINGLYLAGQINGTTGYEEAAAQGLIAGINAALDIQNKAPLILRRDEAYIGVLIDDLVTKGTKEPYRMFTSRAEFRLLLREDNAIFRLSGYGHDIGLIKDYEFDEISRRKAQIQKGINFLLNNVITPNKENLAKLKSLGADAISQNTTWQKIVGGKNFSAEKIREIDSMFVDFSDDELSEILTECKYYFYIQMQKDEVAKMKNMLNTKIPTELDFSKISGLSNEIIEKLNKFNPPTLFAASEISGVTPAAIDILHIYIKQFKGK</sequence>
<keyword id="KW-0963">Cytoplasm</keyword>
<keyword id="KW-0274">FAD</keyword>
<keyword id="KW-0285">Flavoprotein</keyword>
<keyword id="KW-0520">NAD</keyword>
<keyword id="KW-1185">Reference proteome</keyword>
<keyword id="KW-0819">tRNA processing</keyword>
<accession>A7I199</accession>